<sequence length="550" mass="59576">MPAAWMPVLRLGAYASRVPGPAGGDGAVPIAITCFTRGLDIRKEKADVLCPAGCPLEEFSVFGNIVYASVSSICGAAVHRGVISISGGPVRVYSLPGRENYSSVDANGIQSQTLARWSASFTVTKGKSSTQEATGQAVSTARPPTGKRLKKTPEKKTGNKDCKADIAFLIDGSFNIGQRRFNLQKNFVGKVALMLGIGTEGPHVGLVQASEHPKIEFYLKNFTSAKDVLFAIKEVGFRGGNSNTGKALKHTAQKFFTADTGMRKGIPKVVVVFIDGWPSDDIEEAGIVAREFGVNVFIVSVAKPIPEELGMVQDVAFVDKAVCRNNGFFSYHMPNWFGTTKYVKPLVQKLCSHEQMMCSKTCYNSVNIAFLIDGSSSVGDSNFRLMLEFVSNIAKTFEISDIGAKIAAVQFTYDQRTEFSFTDYSTKENVLAVIRSIRYMSGGTATGDAISFTVRNVFGPVRDSPNKNFLVIITDGQSYDDVRGPAAAAHDAGITIFSVGVAWAPLDDLKDMASKPKESHAFFTREFTGLEPIVSDIIRGICRDFLESQQ</sequence>
<dbReference type="EMBL" id="AAKN02047567">
    <property type="status" value="NOT_ANNOTATED_CDS"/>
    <property type="molecule type" value="Genomic_DNA"/>
</dbReference>
<dbReference type="SMR" id="P84552"/>
<dbReference type="FunCoup" id="P84552">
    <property type="interactions" value="118"/>
</dbReference>
<dbReference type="STRING" id="10141.ENSCPOP00000029967"/>
<dbReference type="GlyCosmos" id="P84552">
    <property type="glycosylation" value="1 site, No reported glycans"/>
</dbReference>
<dbReference type="eggNOG" id="KOG1216">
    <property type="taxonomic scope" value="Eukaryota"/>
</dbReference>
<dbReference type="InParanoid" id="P84552"/>
<dbReference type="TreeFam" id="TF318242"/>
<dbReference type="Proteomes" id="UP000005447">
    <property type="component" value="Unassembled WGS sequence"/>
</dbReference>
<dbReference type="GO" id="GO:0062023">
    <property type="term" value="C:collagen-containing extracellular matrix"/>
    <property type="evidence" value="ECO:0000250"/>
    <property type="project" value="UniProtKB"/>
</dbReference>
<dbReference type="GO" id="GO:0005576">
    <property type="term" value="C:extracellular region"/>
    <property type="evidence" value="ECO:0007669"/>
    <property type="project" value="UniProtKB-KW"/>
</dbReference>
<dbReference type="GO" id="GO:0005518">
    <property type="term" value="F:collagen binding"/>
    <property type="evidence" value="ECO:0000250"/>
    <property type="project" value="UniProtKB"/>
</dbReference>
<dbReference type="CDD" id="cd01472">
    <property type="entry name" value="vWA_collagen"/>
    <property type="match status" value="1"/>
</dbReference>
<dbReference type="CDD" id="cd01482">
    <property type="entry name" value="vWA_collagen_alphaI-XII-like"/>
    <property type="match status" value="1"/>
</dbReference>
<dbReference type="FunFam" id="3.40.50.410:FF:000029">
    <property type="entry name" value="Cochlin"/>
    <property type="match status" value="1"/>
</dbReference>
<dbReference type="FunFam" id="2.170.130.20:FF:000001">
    <property type="entry name" value="Cysteine-rich secretory protein LCCL domain-containing 1"/>
    <property type="match status" value="1"/>
</dbReference>
<dbReference type="FunFam" id="3.40.50.410:FF:000009">
    <property type="entry name" value="Putative vitrin"/>
    <property type="match status" value="1"/>
</dbReference>
<dbReference type="Gene3D" id="2.170.130.20">
    <property type="entry name" value="LCCL-like domain"/>
    <property type="match status" value="1"/>
</dbReference>
<dbReference type="Gene3D" id="3.40.50.410">
    <property type="entry name" value="von Willebrand factor, type A domain"/>
    <property type="match status" value="2"/>
</dbReference>
<dbReference type="InterPro" id="IPR050525">
    <property type="entry name" value="ECM_Assembly_Org"/>
</dbReference>
<dbReference type="InterPro" id="IPR004043">
    <property type="entry name" value="LCCL"/>
</dbReference>
<dbReference type="InterPro" id="IPR036609">
    <property type="entry name" value="LCCL_sf"/>
</dbReference>
<dbReference type="InterPro" id="IPR002035">
    <property type="entry name" value="VWF_A"/>
</dbReference>
<dbReference type="InterPro" id="IPR036465">
    <property type="entry name" value="vWFA_dom_sf"/>
</dbReference>
<dbReference type="PANTHER" id="PTHR24020:SF36">
    <property type="entry name" value="COCHLIN"/>
    <property type="match status" value="1"/>
</dbReference>
<dbReference type="PANTHER" id="PTHR24020">
    <property type="entry name" value="COLLAGEN ALPHA"/>
    <property type="match status" value="1"/>
</dbReference>
<dbReference type="Pfam" id="PF03815">
    <property type="entry name" value="LCCL"/>
    <property type="match status" value="1"/>
</dbReference>
<dbReference type="Pfam" id="PF00092">
    <property type="entry name" value="VWA"/>
    <property type="match status" value="2"/>
</dbReference>
<dbReference type="PRINTS" id="PR00453">
    <property type="entry name" value="VWFADOMAIN"/>
</dbReference>
<dbReference type="SMART" id="SM00603">
    <property type="entry name" value="LCCL"/>
    <property type="match status" value="1"/>
</dbReference>
<dbReference type="SMART" id="SM00327">
    <property type="entry name" value="VWA"/>
    <property type="match status" value="2"/>
</dbReference>
<dbReference type="SUPFAM" id="SSF69848">
    <property type="entry name" value="LCCL domain"/>
    <property type="match status" value="1"/>
</dbReference>
<dbReference type="SUPFAM" id="SSF53300">
    <property type="entry name" value="vWA-like"/>
    <property type="match status" value="2"/>
</dbReference>
<dbReference type="PROSITE" id="PS50820">
    <property type="entry name" value="LCCL"/>
    <property type="match status" value="1"/>
</dbReference>
<dbReference type="PROSITE" id="PS50234">
    <property type="entry name" value="VWFA"/>
    <property type="match status" value="2"/>
</dbReference>
<feature type="signal peptide" evidence="3">
    <location>
        <begin position="1"/>
        <end position="15"/>
    </location>
</feature>
<feature type="chain" id="PRO_0000090001" description="Cochlin" evidence="3">
    <location>
        <begin position="16"/>
        <end position="550"/>
    </location>
</feature>
<feature type="domain" description="LCCL" evidence="4">
    <location>
        <begin position="28"/>
        <end position="121"/>
    </location>
</feature>
<feature type="domain" description="VWFA 1" evidence="5">
    <location>
        <begin position="165"/>
        <end position="350"/>
    </location>
</feature>
<feature type="domain" description="VWFA 2" evidence="5">
    <location>
        <begin position="367"/>
        <end position="537"/>
    </location>
</feature>
<feature type="region of interest" description="Disordered" evidence="6">
    <location>
        <begin position="126"/>
        <end position="158"/>
    </location>
</feature>
<feature type="compositionally biased region" description="Polar residues" evidence="6">
    <location>
        <begin position="126"/>
        <end position="139"/>
    </location>
</feature>
<feature type="glycosylation site" description="N-linked (GlcNAc...) asparagine" evidence="3">
    <location>
        <position position="100"/>
    </location>
</feature>
<feature type="disulfide bond" evidence="4">
    <location>
        <begin position="34"/>
        <end position="50"/>
    </location>
</feature>
<feature type="disulfide bond" evidence="4">
    <location>
        <begin position="54"/>
        <end position="74"/>
    </location>
</feature>
<protein>
    <recommendedName>
        <fullName>Cochlin</fullName>
    </recommendedName>
    <alternativeName>
        <fullName>COCH-5B2</fullName>
    </alternativeName>
</protein>
<accession>P84552</accession>
<accession>H0VTP0</accession>
<evidence type="ECO:0000250" key="1"/>
<evidence type="ECO:0000250" key="2">
    <source>
        <dbReference type="UniProtKB" id="O43405"/>
    </source>
</evidence>
<evidence type="ECO:0000255" key="3"/>
<evidence type="ECO:0000255" key="4">
    <source>
        <dbReference type="PROSITE-ProRule" id="PRU00123"/>
    </source>
</evidence>
<evidence type="ECO:0000255" key="5">
    <source>
        <dbReference type="PROSITE-ProRule" id="PRU00219"/>
    </source>
</evidence>
<evidence type="ECO:0000256" key="6">
    <source>
        <dbReference type="SAM" id="MobiDB-lite"/>
    </source>
</evidence>
<evidence type="ECO:0000269" key="7">
    <source>
    </source>
</evidence>
<keyword id="KW-0903">Direct protein sequencing</keyword>
<keyword id="KW-1015">Disulfide bond</keyword>
<keyword id="KW-0272">Extracellular matrix</keyword>
<keyword id="KW-0325">Glycoprotein</keyword>
<keyword id="KW-1185">Reference proteome</keyword>
<keyword id="KW-0677">Repeat</keyword>
<keyword id="KW-0964">Secreted</keyword>
<keyword id="KW-0732">Signal</keyword>
<reference key="1">
    <citation type="journal article" date="2011" name="Nature">
        <title>A high-resolution map of human evolutionary constraint using 29 mammals.</title>
        <authorList>
            <person name="Lindblad-Toh K."/>
            <person name="Garber M."/>
            <person name="Zuk O."/>
            <person name="Lin M.F."/>
            <person name="Parker B.J."/>
            <person name="Washietl S."/>
            <person name="Kheradpour P."/>
            <person name="Ernst J."/>
            <person name="Jordan G."/>
            <person name="Mauceli E."/>
            <person name="Ward L.D."/>
            <person name="Lowe C.B."/>
            <person name="Holloway A.K."/>
            <person name="Clamp M."/>
            <person name="Gnerre S."/>
            <person name="Alfoldi J."/>
            <person name="Beal K."/>
            <person name="Chang J."/>
            <person name="Clawson H."/>
            <person name="Cuff J."/>
            <person name="Di Palma F."/>
            <person name="Fitzgerald S."/>
            <person name="Flicek P."/>
            <person name="Guttman M."/>
            <person name="Hubisz M.J."/>
            <person name="Jaffe D.B."/>
            <person name="Jungreis I."/>
            <person name="Kent W.J."/>
            <person name="Kostka D."/>
            <person name="Lara M."/>
            <person name="Martins A.L."/>
            <person name="Massingham T."/>
            <person name="Moltke I."/>
            <person name="Raney B.J."/>
            <person name="Rasmussen M.D."/>
            <person name="Robinson J."/>
            <person name="Stark A."/>
            <person name="Vilella A.J."/>
            <person name="Wen J."/>
            <person name="Xie X."/>
            <person name="Zody M.C."/>
            <person name="Baldwin J."/>
            <person name="Bloom T."/>
            <person name="Chin C.W."/>
            <person name="Heiman D."/>
            <person name="Nicol R."/>
            <person name="Nusbaum C."/>
            <person name="Young S."/>
            <person name="Wilkinson J."/>
            <person name="Worley K.C."/>
            <person name="Kovar C.L."/>
            <person name="Muzny D.M."/>
            <person name="Gibbs R.A."/>
            <person name="Cree A."/>
            <person name="Dihn H.H."/>
            <person name="Fowler G."/>
            <person name="Jhangiani S."/>
            <person name="Joshi V."/>
            <person name="Lee S."/>
            <person name="Lewis L.R."/>
            <person name="Nazareth L.V."/>
            <person name="Okwuonu G."/>
            <person name="Santibanez J."/>
            <person name="Warren W.C."/>
            <person name="Mardis E.R."/>
            <person name="Weinstock G.M."/>
            <person name="Wilson R.K."/>
            <person name="Delehaunty K."/>
            <person name="Dooling D."/>
            <person name="Fronik C."/>
            <person name="Fulton L."/>
            <person name="Fulton B."/>
            <person name="Graves T."/>
            <person name="Minx P."/>
            <person name="Sodergren E."/>
            <person name="Birney E."/>
            <person name="Margulies E.H."/>
            <person name="Herrero J."/>
            <person name="Green E.D."/>
            <person name="Haussler D."/>
            <person name="Siepel A."/>
            <person name="Goldman N."/>
            <person name="Pollard K.S."/>
            <person name="Pedersen J.S."/>
            <person name="Lander E.S."/>
            <person name="Kellis M."/>
        </authorList>
    </citation>
    <scope>NUCLEOTIDE SEQUENCE [LARGE SCALE GENOMIC DNA]</scope>
    <source>
        <strain>2N</strain>
    </source>
</reference>
<reference key="2">
    <citation type="journal article" date="2001" name="Otol. Neurotol.">
        <title>COCH5B2 is a target antigen of anti-inner ear antibodies in autoimmune inner ear diseases.</title>
        <authorList>
            <person name="Boulassel M.-R."/>
            <person name="Tomasi J.-P."/>
            <person name="Deggouj N."/>
            <person name="Gersdorff M."/>
        </authorList>
    </citation>
    <scope>PROTEIN SEQUENCE OF 397-405; 417-427 AND 526-539</scope>
    <source>
        <strain evidence="7">Hartley</strain>
        <tissue evidence="7">Cochlea</tissue>
    </source>
</reference>
<gene>
    <name type="primary">COCH</name>
    <name type="synonym">COCH5B2</name>
</gene>
<comment type="function">
    <text evidence="1">Plays a role in the control of cell shape and motility in the trabecular meshwork.</text>
</comment>
<comment type="subunit">
    <text evidence="2">Monomer. May form homodimer. Interacts with type II collagen. Interacts with ANXA2. Interacts with SLC44A2.</text>
</comment>
<comment type="subcellular location">
    <subcellularLocation>
        <location evidence="2">Secreted</location>
        <location evidence="2">Extracellular space</location>
        <location evidence="2">Extracellular matrix</location>
    </subcellularLocation>
</comment>
<comment type="PTM">
    <text evidence="2">N-glycosylated.</text>
</comment>
<comment type="online information" name="Protein Spotlight">
    <link uri="https://www.proteinspotlight.org/back_issues/004"/>
    <text>The Japanese Horseshoe Crab and Deafness - Issue 4 of November 2000</text>
</comment>
<organism>
    <name type="scientific">Cavia porcellus</name>
    <name type="common">Guinea pig</name>
    <dbReference type="NCBI Taxonomy" id="10141"/>
    <lineage>
        <taxon>Eukaryota</taxon>
        <taxon>Metazoa</taxon>
        <taxon>Chordata</taxon>
        <taxon>Craniata</taxon>
        <taxon>Vertebrata</taxon>
        <taxon>Euteleostomi</taxon>
        <taxon>Mammalia</taxon>
        <taxon>Eutheria</taxon>
        <taxon>Euarchontoglires</taxon>
        <taxon>Glires</taxon>
        <taxon>Rodentia</taxon>
        <taxon>Hystricomorpha</taxon>
        <taxon>Caviidae</taxon>
        <taxon>Cavia</taxon>
    </lineage>
</organism>
<name>COCH_CAVPO</name>
<proteinExistence type="evidence at protein level"/>